<dbReference type="EC" id="2.4.2.7" evidence="1"/>
<dbReference type="EMBL" id="CP001078">
    <property type="protein sequence ID" value="ACD53160.1"/>
    <property type="molecule type" value="Genomic_DNA"/>
</dbReference>
<dbReference type="RefSeq" id="WP_003373638.1">
    <property type="nucleotide sequence ID" value="NC_010723.1"/>
</dbReference>
<dbReference type="SMR" id="B2V345"/>
<dbReference type="KEGG" id="cbt:CLH_0964"/>
<dbReference type="HOGENOM" id="CLU_063339_3_0_9"/>
<dbReference type="UniPathway" id="UPA00588">
    <property type="reaction ID" value="UER00646"/>
</dbReference>
<dbReference type="GO" id="GO:0005737">
    <property type="term" value="C:cytoplasm"/>
    <property type="evidence" value="ECO:0007669"/>
    <property type="project" value="UniProtKB-SubCell"/>
</dbReference>
<dbReference type="GO" id="GO:0002055">
    <property type="term" value="F:adenine binding"/>
    <property type="evidence" value="ECO:0007669"/>
    <property type="project" value="TreeGrafter"/>
</dbReference>
<dbReference type="GO" id="GO:0003999">
    <property type="term" value="F:adenine phosphoribosyltransferase activity"/>
    <property type="evidence" value="ECO:0007669"/>
    <property type="project" value="UniProtKB-UniRule"/>
</dbReference>
<dbReference type="GO" id="GO:0016208">
    <property type="term" value="F:AMP binding"/>
    <property type="evidence" value="ECO:0007669"/>
    <property type="project" value="TreeGrafter"/>
</dbReference>
<dbReference type="GO" id="GO:0006168">
    <property type="term" value="P:adenine salvage"/>
    <property type="evidence" value="ECO:0007669"/>
    <property type="project" value="InterPro"/>
</dbReference>
<dbReference type="GO" id="GO:0044209">
    <property type="term" value="P:AMP salvage"/>
    <property type="evidence" value="ECO:0007669"/>
    <property type="project" value="UniProtKB-UniRule"/>
</dbReference>
<dbReference type="GO" id="GO:0006166">
    <property type="term" value="P:purine ribonucleoside salvage"/>
    <property type="evidence" value="ECO:0007669"/>
    <property type="project" value="UniProtKB-KW"/>
</dbReference>
<dbReference type="CDD" id="cd06223">
    <property type="entry name" value="PRTases_typeI"/>
    <property type="match status" value="1"/>
</dbReference>
<dbReference type="FunFam" id="3.40.50.2020:FF:000004">
    <property type="entry name" value="Adenine phosphoribosyltransferase"/>
    <property type="match status" value="1"/>
</dbReference>
<dbReference type="Gene3D" id="3.40.50.2020">
    <property type="match status" value="1"/>
</dbReference>
<dbReference type="HAMAP" id="MF_00004">
    <property type="entry name" value="Aden_phosphoribosyltr"/>
    <property type="match status" value="1"/>
</dbReference>
<dbReference type="InterPro" id="IPR005764">
    <property type="entry name" value="Ade_phspho_trans"/>
</dbReference>
<dbReference type="InterPro" id="IPR000836">
    <property type="entry name" value="PRibTrfase_dom"/>
</dbReference>
<dbReference type="InterPro" id="IPR029057">
    <property type="entry name" value="PRTase-like"/>
</dbReference>
<dbReference type="InterPro" id="IPR050054">
    <property type="entry name" value="UPRTase/APRTase"/>
</dbReference>
<dbReference type="NCBIfam" id="TIGR01090">
    <property type="entry name" value="apt"/>
    <property type="match status" value="1"/>
</dbReference>
<dbReference type="NCBIfam" id="NF002633">
    <property type="entry name" value="PRK02304.1-2"/>
    <property type="match status" value="1"/>
</dbReference>
<dbReference type="NCBIfam" id="NF002634">
    <property type="entry name" value="PRK02304.1-3"/>
    <property type="match status" value="1"/>
</dbReference>
<dbReference type="NCBIfam" id="NF002636">
    <property type="entry name" value="PRK02304.1-5"/>
    <property type="match status" value="1"/>
</dbReference>
<dbReference type="PANTHER" id="PTHR32315">
    <property type="entry name" value="ADENINE PHOSPHORIBOSYLTRANSFERASE"/>
    <property type="match status" value="1"/>
</dbReference>
<dbReference type="PANTHER" id="PTHR32315:SF3">
    <property type="entry name" value="ADENINE PHOSPHORIBOSYLTRANSFERASE"/>
    <property type="match status" value="1"/>
</dbReference>
<dbReference type="Pfam" id="PF00156">
    <property type="entry name" value="Pribosyltran"/>
    <property type="match status" value="1"/>
</dbReference>
<dbReference type="SUPFAM" id="SSF53271">
    <property type="entry name" value="PRTase-like"/>
    <property type="match status" value="1"/>
</dbReference>
<feature type="chain" id="PRO_1000088964" description="Adenine phosphoribosyltransferase">
    <location>
        <begin position="1"/>
        <end position="172"/>
    </location>
</feature>
<reference key="1">
    <citation type="submission" date="2008-05" db="EMBL/GenBank/DDBJ databases">
        <title>Complete genome sequence of Clostridium botulinum E3 str. Alaska E43.</title>
        <authorList>
            <person name="Brinkac L.M."/>
            <person name="Brown J.L."/>
            <person name="Bruce D."/>
            <person name="Detter C."/>
            <person name="Munk C."/>
            <person name="Smith L.A."/>
            <person name="Smith T.J."/>
            <person name="Sutton G."/>
            <person name="Brettin T.S."/>
        </authorList>
    </citation>
    <scope>NUCLEOTIDE SEQUENCE [LARGE SCALE GENOMIC DNA]</scope>
    <source>
        <strain>Alaska E43 / Type E3</strain>
    </source>
</reference>
<keyword id="KW-0963">Cytoplasm</keyword>
<keyword id="KW-0328">Glycosyltransferase</keyword>
<keyword id="KW-0660">Purine salvage</keyword>
<keyword id="KW-0808">Transferase</keyword>
<name>APT_CLOBA</name>
<proteinExistence type="inferred from homology"/>
<organism>
    <name type="scientific">Clostridium botulinum (strain Alaska E43 / Type E3)</name>
    <dbReference type="NCBI Taxonomy" id="508767"/>
    <lineage>
        <taxon>Bacteria</taxon>
        <taxon>Bacillati</taxon>
        <taxon>Bacillota</taxon>
        <taxon>Clostridia</taxon>
        <taxon>Eubacteriales</taxon>
        <taxon>Clostridiaceae</taxon>
        <taxon>Clostridium</taxon>
    </lineage>
</organism>
<sequence length="172" mass="18619">MDLKEKIRIIDGFPKEGISFKDITTLIGDGEGLKASIDMFVEYLKDKEIDLIVGPEARGFIFGVPVAYALGAGFVPVRKPGKLPGETISVNYDLEYGSDSLQIHKDSIKKGQRVAIVDDLLATGGTVEGVAKLVEEAGGEVVSLAFLIELIDLKGRDKLGDYDVISLTQYDI</sequence>
<gene>
    <name evidence="1" type="primary">apt</name>
    <name type="ordered locus">CLH_0964</name>
</gene>
<evidence type="ECO:0000255" key="1">
    <source>
        <dbReference type="HAMAP-Rule" id="MF_00004"/>
    </source>
</evidence>
<comment type="function">
    <text evidence="1">Catalyzes a salvage reaction resulting in the formation of AMP, that is energically less costly than de novo synthesis.</text>
</comment>
<comment type="catalytic activity">
    <reaction evidence="1">
        <text>AMP + diphosphate = 5-phospho-alpha-D-ribose 1-diphosphate + adenine</text>
        <dbReference type="Rhea" id="RHEA:16609"/>
        <dbReference type="ChEBI" id="CHEBI:16708"/>
        <dbReference type="ChEBI" id="CHEBI:33019"/>
        <dbReference type="ChEBI" id="CHEBI:58017"/>
        <dbReference type="ChEBI" id="CHEBI:456215"/>
        <dbReference type="EC" id="2.4.2.7"/>
    </reaction>
</comment>
<comment type="pathway">
    <text evidence="1">Purine metabolism; AMP biosynthesis via salvage pathway; AMP from adenine: step 1/1.</text>
</comment>
<comment type="subunit">
    <text evidence="1">Homodimer.</text>
</comment>
<comment type="subcellular location">
    <subcellularLocation>
        <location evidence="1">Cytoplasm</location>
    </subcellularLocation>
</comment>
<comment type="similarity">
    <text evidence="1">Belongs to the purine/pyrimidine phosphoribosyltransferase family.</text>
</comment>
<accession>B2V345</accession>
<protein>
    <recommendedName>
        <fullName evidence="1">Adenine phosphoribosyltransferase</fullName>
        <shortName evidence="1">APRT</shortName>
        <ecNumber evidence="1">2.4.2.7</ecNumber>
    </recommendedName>
</protein>